<name>Y756_LYSSC</name>
<proteinExistence type="inferred from homology"/>
<gene>
    <name type="ordered locus">Bsph_0756</name>
</gene>
<protein>
    <recommendedName>
        <fullName evidence="1">UPF0398 protein Bsph_0756</fullName>
    </recommendedName>
</protein>
<sequence>MITGYKPHELGIFNDKHPRIGIIKKALENRLRLLLDEGLEWVIISGQQGVESWSAEVVWTLKKEFPHLKYAVITPFLEQEKNWQDPKKEKYQTIIARADFVTSITKKPYEAPWQFIEKDKFIIQNTDGLLLIYDEENEGSPKYIKRLAEKFMESHDYSLLTINAYDLQMIAEEIQQQDW</sequence>
<feature type="chain" id="PRO_0000382550" description="UPF0398 protein Bsph_0756">
    <location>
        <begin position="1"/>
        <end position="179"/>
    </location>
</feature>
<reference key="1">
    <citation type="journal article" date="2008" name="J. Bacteriol.">
        <title>Complete genome sequence of the mosquitocidal bacterium Bacillus sphaericus C3-41 and comparison with those of closely related Bacillus species.</title>
        <authorList>
            <person name="Hu X."/>
            <person name="Fan W."/>
            <person name="Han B."/>
            <person name="Liu H."/>
            <person name="Zheng D."/>
            <person name="Li Q."/>
            <person name="Dong W."/>
            <person name="Yan J."/>
            <person name="Gao M."/>
            <person name="Berry C."/>
            <person name="Yuan Z."/>
        </authorList>
    </citation>
    <scope>NUCLEOTIDE SEQUENCE [LARGE SCALE GENOMIC DNA]</scope>
    <source>
        <strain>C3-41</strain>
    </source>
</reference>
<dbReference type="EMBL" id="CP000817">
    <property type="protein sequence ID" value="ACA38372.1"/>
    <property type="molecule type" value="Genomic_DNA"/>
</dbReference>
<dbReference type="SMR" id="B1HYB1"/>
<dbReference type="EnsemblBacteria" id="ACA38372">
    <property type="protein sequence ID" value="ACA38372"/>
    <property type="gene ID" value="Bsph_0756"/>
</dbReference>
<dbReference type="KEGG" id="lsp:Bsph_0756"/>
<dbReference type="HOGENOM" id="CLU_105319_0_0_9"/>
<dbReference type="Proteomes" id="UP000002164">
    <property type="component" value="Chromosome"/>
</dbReference>
<dbReference type="Gene3D" id="3.40.50.450">
    <property type="match status" value="1"/>
</dbReference>
<dbReference type="HAMAP" id="MF_01575">
    <property type="entry name" value="UPF0398"/>
    <property type="match status" value="1"/>
</dbReference>
<dbReference type="InterPro" id="IPR010697">
    <property type="entry name" value="YspA"/>
</dbReference>
<dbReference type="NCBIfam" id="NF010181">
    <property type="entry name" value="PRK13660.1"/>
    <property type="match status" value="1"/>
</dbReference>
<dbReference type="PANTHER" id="PTHR38440:SF1">
    <property type="entry name" value="UPF0398 PROTEIN SPR0331"/>
    <property type="match status" value="1"/>
</dbReference>
<dbReference type="PANTHER" id="PTHR38440">
    <property type="entry name" value="UPF0398 PROTEIN YPSA"/>
    <property type="match status" value="1"/>
</dbReference>
<dbReference type="Pfam" id="PF06908">
    <property type="entry name" value="YpsA"/>
    <property type="match status" value="1"/>
</dbReference>
<dbReference type="PIRSF" id="PIRSF021290">
    <property type="entry name" value="DUF1273"/>
    <property type="match status" value="1"/>
</dbReference>
<dbReference type="SUPFAM" id="SSF102405">
    <property type="entry name" value="MCP/YpsA-like"/>
    <property type="match status" value="1"/>
</dbReference>
<organism>
    <name type="scientific">Lysinibacillus sphaericus (strain C3-41)</name>
    <dbReference type="NCBI Taxonomy" id="444177"/>
    <lineage>
        <taxon>Bacteria</taxon>
        <taxon>Bacillati</taxon>
        <taxon>Bacillota</taxon>
        <taxon>Bacilli</taxon>
        <taxon>Bacillales</taxon>
        <taxon>Bacillaceae</taxon>
        <taxon>Lysinibacillus</taxon>
    </lineage>
</organism>
<comment type="similarity">
    <text evidence="1">Belongs to the UPF0398 family.</text>
</comment>
<evidence type="ECO:0000255" key="1">
    <source>
        <dbReference type="HAMAP-Rule" id="MF_01575"/>
    </source>
</evidence>
<accession>B1HYB1</accession>